<proteinExistence type="inferred from homology"/>
<organismHost>
    <name type="scientific">Abutilon</name>
    <dbReference type="NCBI Taxonomy" id="3630"/>
</organismHost>
<organismHost>
    <name type="scientific">Gossypium hirsutum</name>
    <name type="common">Upland cotton</name>
    <name type="synonym">Gossypium mexicanum</name>
    <dbReference type="NCBI Taxonomy" id="3635"/>
</organismHost>
<organismHost>
    <name type="scientific">Hibiscus</name>
    <dbReference type="NCBI Taxonomy" id="47605"/>
</organismHost>
<organismHost>
    <name type="scientific">Malva</name>
    <dbReference type="NCBI Taxonomy" id="96479"/>
</organismHost>
<organismHost>
    <name type="scientific">Phaseolus vulgaris</name>
    <name type="common">Kidney bean</name>
    <name type="synonym">French bean</name>
    <dbReference type="NCBI Taxonomy" id="3885"/>
</organismHost>
<organismHost>
    <name type="scientific">Sida</name>
    <dbReference type="NCBI Taxonomy" id="108335"/>
</organismHost>
<reference key="1">
    <citation type="journal article" date="1990" name="Virology">
        <title>The nucleotide sequence of abutilon mosaic virus reveals prokaryotic as well as eukaryotic features.</title>
        <authorList>
            <person name="Frischmuth T."/>
            <person name="Zimmat G."/>
            <person name="Jeske H."/>
        </authorList>
    </citation>
    <scope>NUCLEOTIDE SEQUENCE [GENOMIC DNA]</scope>
</reference>
<protein>
    <recommendedName>
        <fullName>Protein AC4</fullName>
    </recommendedName>
    <alternativeName>
        <fullName>Protein AL4</fullName>
    </alternativeName>
</protein>
<organism>
    <name type="scientific">Abutilon mosaic virus (isolate West India)</name>
    <name type="common">AbMV</name>
    <dbReference type="NCBI Taxonomy" id="10816"/>
    <lineage>
        <taxon>Viruses</taxon>
        <taxon>Monodnaviria</taxon>
        <taxon>Shotokuvirae</taxon>
        <taxon>Cressdnaviricota</taxon>
        <taxon>Repensiviricetes</taxon>
        <taxon>Geplafuvirales</taxon>
        <taxon>Geminiviridae</taxon>
        <taxon>Begomovirus</taxon>
        <taxon>Begomovirus bauri</taxon>
    </lineage>
</organism>
<sequence>MCSYSSKANTNARITDSSIWSPQPGQHISIQTYRELNPAPTSSPTSTRTEIQLNGENSRSTADLPGEANRLLMIHMPRR</sequence>
<evidence type="ECO:0000250" key="1"/>
<evidence type="ECO:0000256" key="2">
    <source>
        <dbReference type="SAM" id="MobiDB-lite"/>
    </source>
</evidence>
<evidence type="ECO:0000305" key="3"/>
<gene>
    <name type="ORF">AC4</name>
    <name type="ORF">AL4</name>
</gene>
<accession>P0C6F9</accession>
<comment type="function">
    <text evidence="1">Pathogenicity determinant (By similarity). May act as a suppressor of RNA-mediated gene silencing, also known as post-transcriptional gene silencing (PTGS), a mechanism of plant viral defense that limits the accumulation of viral RNAs.</text>
</comment>
<comment type="similarity">
    <text evidence="3">Belongs to the geminiviridae protein AC4/C4 family.</text>
</comment>
<feature type="chain" id="PRO_0000323686" description="Protein AC4">
    <location>
        <begin position="1"/>
        <end position="79"/>
    </location>
</feature>
<feature type="region of interest" description="Disordered" evidence="2">
    <location>
        <begin position="1"/>
        <end position="24"/>
    </location>
</feature>
<feature type="region of interest" description="Disordered" evidence="2">
    <location>
        <begin position="36"/>
        <end position="79"/>
    </location>
</feature>
<feature type="compositionally biased region" description="Low complexity" evidence="2">
    <location>
        <begin position="38"/>
        <end position="47"/>
    </location>
</feature>
<feature type="compositionally biased region" description="Polar residues" evidence="2">
    <location>
        <begin position="48"/>
        <end position="61"/>
    </location>
</feature>
<dbReference type="EMBL" id="X15983">
    <property type="status" value="NOT_ANNOTATED_CDS"/>
    <property type="molecule type" value="Genomic_DNA"/>
</dbReference>
<dbReference type="SMR" id="P0C6F9"/>
<dbReference type="Proteomes" id="UP000006885">
    <property type="component" value="Genome"/>
</dbReference>
<dbReference type="GO" id="GO:0052170">
    <property type="term" value="P:symbiont-mediated suppression of host innate immune response"/>
    <property type="evidence" value="ECO:0007669"/>
    <property type="project" value="UniProtKB-KW"/>
</dbReference>
<dbReference type="InterPro" id="IPR002488">
    <property type="entry name" value="Gemini_C4"/>
</dbReference>
<dbReference type="Pfam" id="PF01492">
    <property type="entry name" value="Gemini_C4"/>
    <property type="match status" value="1"/>
</dbReference>
<name>AC4_ABMVW</name>
<keyword id="KW-0945">Host-virus interaction</keyword>
<keyword id="KW-1090">Inhibition of host innate immune response by virus</keyword>
<keyword id="KW-1185">Reference proteome</keyword>
<keyword id="KW-0941">Suppressor of RNA silencing</keyword>
<keyword id="KW-0899">Viral immunoevasion</keyword>